<feature type="chain" id="PRO_1000025429" description="Argininosuccinate synthase">
    <location>
        <begin position="1"/>
        <end position="447"/>
    </location>
</feature>
<feature type="binding site" evidence="1">
    <location>
        <begin position="17"/>
        <end position="25"/>
    </location>
    <ligand>
        <name>ATP</name>
        <dbReference type="ChEBI" id="CHEBI:30616"/>
    </ligand>
</feature>
<feature type="binding site" evidence="1">
    <location>
        <position position="43"/>
    </location>
    <ligand>
        <name>ATP</name>
        <dbReference type="ChEBI" id="CHEBI:30616"/>
    </ligand>
</feature>
<feature type="binding site" evidence="1">
    <location>
        <position position="99"/>
    </location>
    <ligand>
        <name>L-citrulline</name>
        <dbReference type="ChEBI" id="CHEBI:57743"/>
    </ligand>
</feature>
<feature type="binding site" evidence="1">
    <location>
        <position position="129"/>
    </location>
    <ligand>
        <name>ATP</name>
        <dbReference type="ChEBI" id="CHEBI:30616"/>
    </ligand>
</feature>
<feature type="binding site" evidence="1">
    <location>
        <position position="131"/>
    </location>
    <ligand>
        <name>ATP</name>
        <dbReference type="ChEBI" id="CHEBI:30616"/>
    </ligand>
</feature>
<feature type="binding site" evidence="1">
    <location>
        <position position="131"/>
    </location>
    <ligand>
        <name>L-aspartate</name>
        <dbReference type="ChEBI" id="CHEBI:29991"/>
    </ligand>
</feature>
<feature type="binding site" evidence="1">
    <location>
        <position position="135"/>
    </location>
    <ligand>
        <name>L-aspartate</name>
        <dbReference type="ChEBI" id="CHEBI:29991"/>
    </ligand>
</feature>
<feature type="binding site" evidence="1">
    <location>
        <position position="135"/>
    </location>
    <ligand>
        <name>L-citrulline</name>
        <dbReference type="ChEBI" id="CHEBI:57743"/>
    </ligand>
</feature>
<feature type="binding site" evidence="1">
    <location>
        <position position="136"/>
    </location>
    <ligand>
        <name>ATP</name>
        <dbReference type="ChEBI" id="CHEBI:30616"/>
    </ligand>
</feature>
<feature type="binding site" evidence="1">
    <location>
        <position position="136"/>
    </location>
    <ligand>
        <name>L-aspartate</name>
        <dbReference type="ChEBI" id="CHEBI:29991"/>
    </ligand>
</feature>
<feature type="binding site" evidence="1">
    <location>
        <position position="139"/>
    </location>
    <ligand>
        <name>L-citrulline</name>
        <dbReference type="ChEBI" id="CHEBI:57743"/>
    </ligand>
</feature>
<feature type="binding site" evidence="1">
    <location>
        <position position="192"/>
    </location>
    <ligand>
        <name>L-citrulline</name>
        <dbReference type="ChEBI" id="CHEBI:57743"/>
    </ligand>
</feature>
<feature type="binding site" evidence="1">
    <location>
        <position position="194"/>
    </location>
    <ligand>
        <name>ATP</name>
        <dbReference type="ChEBI" id="CHEBI:30616"/>
    </ligand>
</feature>
<feature type="binding site" evidence="1">
    <location>
        <position position="201"/>
    </location>
    <ligand>
        <name>L-citrulline</name>
        <dbReference type="ChEBI" id="CHEBI:57743"/>
    </ligand>
</feature>
<feature type="binding site" evidence="1">
    <location>
        <position position="203"/>
    </location>
    <ligand>
        <name>L-citrulline</name>
        <dbReference type="ChEBI" id="CHEBI:57743"/>
    </ligand>
</feature>
<feature type="binding site" evidence="1">
    <location>
        <position position="280"/>
    </location>
    <ligand>
        <name>L-citrulline</name>
        <dbReference type="ChEBI" id="CHEBI:57743"/>
    </ligand>
</feature>
<name>ASSY_KLEP7</name>
<comment type="catalytic activity">
    <reaction evidence="1">
        <text>L-citrulline + L-aspartate + ATP = 2-(N(omega)-L-arginino)succinate + AMP + diphosphate + H(+)</text>
        <dbReference type="Rhea" id="RHEA:10932"/>
        <dbReference type="ChEBI" id="CHEBI:15378"/>
        <dbReference type="ChEBI" id="CHEBI:29991"/>
        <dbReference type="ChEBI" id="CHEBI:30616"/>
        <dbReference type="ChEBI" id="CHEBI:33019"/>
        <dbReference type="ChEBI" id="CHEBI:57472"/>
        <dbReference type="ChEBI" id="CHEBI:57743"/>
        <dbReference type="ChEBI" id="CHEBI:456215"/>
        <dbReference type="EC" id="6.3.4.5"/>
    </reaction>
</comment>
<comment type="pathway">
    <text evidence="1">Amino-acid biosynthesis; L-arginine biosynthesis; L-arginine from L-ornithine and carbamoyl phosphate: step 2/3.</text>
</comment>
<comment type="subunit">
    <text evidence="1">Homotetramer.</text>
</comment>
<comment type="subcellular location">
    <subcellularLocation>
        <location evidence="1">Cytoplasm</location>
    </subcellularLocation>
</comment>
<comment type="similarity">
    <text evidence="1">Belongs to the argininosuccinate synthase family. Type 2 subfamily.</text>
</comment>
<evidence type="ECO:0000255" key="1">
    <source>
        <dbReference type="HAMAP-Rule" id="MF_00581"/>
    </source>
</evidence>
<gene>
    <name evidence="1" type="primary">argG</name>
    <name type="ordered locus">KPN78578_35500</name>
    <name type="ORF">KPN_03580</name>
</gene>
<proteinExistence type="inferred from homology"/>
<keyword id="KW-0028">Amino-acid biosynthesis</keyword>
<keyword id="KW-0055">Arginine biosynthesis</keyword>
<keyword id="KW-0067">ATP-binding</keyword>
<keyword id="KW-0963">Cytoplasm</keyword>
<keyword id="KW-0436">Ligase</keyword>
<keyword id="KW-0547">Nucleotide-binding</keyword>
<dbReference type="EC" id="6.3.4.5" evidence="1"/>
<dbReference type="EMBL" id="CP000647">
    <property type="protein sequence ID" value="ABR78974.1"/>
    <property type="molecule type" value="Genomic_DNA"/>
</dbReference>
<dbReference type="RefSeq" id="WP_004144895.1">
    <property type="nucleotide sequence ID" value="NC_009648.1"/>
</dbReference>
<dbReference type="SMR" id="A6TEJ0"/>
<dbReference type="STRING" id="272620.KPN_03580"/>
<dbReference type="jPOST" id="A6TEJ0"/>
<dbReference type="PaxDb" id="272620-KPN_03580"/>
<dbReference type="EnsemblBacteria" id="ABR78974">
    <property type="protein sequence ID" value="ABR78974"/>
    <property type="gene ID" value="KPN_03580"/>
</dbReference>
<dbReference type="GeneID" id="93250904"/>
<dbReference type="KEGG" id="kpn:KPN_03580"/>
<dbReference type="HOGENOM" id="CLU_032784_4_1_6"/>
<dbReference type="UniPathway" id="UPA00068">
    <property type="reaction ID" value="UER00113"/>
</dbReference>
<dbReference type="Proteomes" id="UP000000265">
    <property type="component" value="Chromosome"/>
</dbReference>
<dbReference type="GO" id="GO:0005737">
    <property type="term" value="C:cytoplasm"/>
    <property type="evidence" value="ECO:0007669"/>
    <property type="project" value="UniProtKB-SubCell"/>
</dbReference>
<dbReference type="GO" id="GO:0004055">
    <property type="term" value="F:argininosuccinate synthase activity"/>
    <property type="evidence" value="ECO:0007669"/>
    <property type="project" value="UniProtKB-UniRule"/>
</dbReference>
<dbReference type="GO" id="GO:0005524">
    <property type="term" value="F:ATP binding"/>
    <property type="evidence" value="ECO:0007669"/>
    <property type="project" value="UniProtKB-UniRule"/>
</dbReference>
<dbReference type="GO" id="GO:0042803">
    <property type="term" value="F:protein homodimerization activity"/>
    <property type="evidence" value="ECO:0007669"/>
    <property type="project" value="InterPro"/>
</dbReference>
<dbReference type="GO" id="GO:0000053">
    <property type="term" value="P:argininosuccinate metabolic process"/>
    <property type="evidence" value="ECO:0007669"/>
    <property type="project" value="TreeGrafter"/>
</dbReference>
<dbReference type="GO" id="GO:0006526">
    <property type="term" value="P:L-arginine biosynthetic process"/>
    <property type="evidence" value="ECO:0007669"/>
    <property type="project" value="UniProtKB-UniRule"/>
</dbReference>
<dbReference type="GO" id="GO:0000050">
    <property type="term" value="P:urea cycle"/>
    <property type="evidence" value="ECO:0007669"/>
    <property type="project" value="TreeGrafter"/>
</dbReference>
<dbReference type="CDD" id="cd01999">
    <property type="entry name" value="ASS"/>
    <property type="match status" value="1"/>
</dbReference>
<dbReference type="FunFam" id="1.10.287.400:FF:000001">
    <property type="entry name" value="Argininosuccinate synthase"/>
    <property type="match status" value="1"/>
</dbReference>
<dbReference type="Gene3D" id="1.10.287.400">
    <property type="match status" value="1"/>
</dbReference>
<dbReference type="Gene3D" id="3.90.1260.10">
    <property type="entry name" value="Argininosuccinate synthetase, chain A, domain 2"/>
    <property type="match status" value="1"/>
</dbReference>
<dbReference type="Gene3D" id="3.40.50.620">
    <property type="entry name" value="HUPs"/>
    <property type="match status" value="1"/>
</dbReference>
<dbReference type="HAMAP" id="MF_00581">
    <property type="entry name" value="Arg_succ_synth_type2"/>
    <property type="match status" value="1"/>
</dbReference>
<dbReference type="InterPro" id="IPR023437">
    <property type="entry name" value="Arg_succ_synth_type2_subfam"/>
</dbReference>
<dbReference type="InterPro" id="IPR048268">
    <property type="entry name" value="Arginosuc_syn_C"/>
</dbReference>
<dbReference type="InterPro" id="IPR048267">
    <property type="entry name" value="Arginosuc_syn_N"/>
</dbReference>
<dbReference type="InterPro" id="IPR001518">
    <property type="entry name" value="Arginosuc_synth"/>
</dbReference>
<dbReference type="InterPro" id="IPR018223">
    <property type="entry name" value="Arginosuc_synth_CS"/>
</dbReference>
<dbReference type="InterPro" id="IPR023434">
    <property type="entry name" value="Arginosuc_synth_type_1_subfam"/>
</dbReference>
<dbReference type="InterPro" id="IPR024074">
    <property type="entry name" value="AS_cat/multimer_dom_body"/>
</dbReference>
<dbReference type="InterPro" id="IPR024073">
    <property type="entry name" value="AS_multimer_C_tail"/>
</dbReference>
<dbReference type="InterPro" id="IPR014729">
    <property type="entry name" value="Rossmann-like_a/b/a_fold"/>
</dbReference>
<dbReference type="NCBIfam" id="TIGR00032">
    <property type="entry name" value="argG"/>
    <property type="match status" value="1"/>
</dbReference>
<dbReference type="NCBIfam" id="NF003779">
    <property type="entry name" value="PRK05370.1"/>
    <property type="match status" value="1"/>
</dbReference>
<dbReference type="PANTHER" id="PTHR11587">
    <property type="entry name" value="ARGININOSUCCINATE SYNTHASE"/>
    <property type="match status" value="1"/>
</dbReference>
<dbReference type="PANTHER" id="PTHR11587:SF2">
    <property type="entry name" value="ARGININOSUCCINATE SYNTHASE"/>
    <property type="match status" value="1"/>
</dbReference>
<dbReference type="Pfam" id="PF20979">
    <property type="entry name" value="Arginosuc_syn_C"/>
    <property type="match status" value="1"/>
</dbReference>
<dbReference type="Pfam" id="PF00764">
    <property type="entry name" value="Arginosuc_synth"/>
    <property type="match status" value="1"/>
</dbReference>
<dbReference type="SUPFAM" id="SSF52402">
    <property type="entry name" value="Adenine nucleotide alpha hydrolases-like"/>
    <property type="match status" value="1"/>
</dbReference>
<dbReference type="SUPFAM" id="SSF69864">
    <property type="entry name" value="Argininosuccinate synthetase, C-terminal domain"/>
    <property type="match status" value="1"/>
</dbReference>
<dbReference type="PROSITE" id="PS00564">
    <property type="entry name" value="ARGININOSUCCIN_SYN_1"/>
    <property type="match status" value="1"/>
</dbReference>
<dbReference type="PROSITE" id="PS00565">
    <property type="entry name" value="ARGININOSUCCIN_SYN_2"/>
    <property type="match status" value="1"/>
</dbReference>
<reference key="1">
    <citation type="submission" date="2006-09" db="EMBL/GenBank/DDBJ databases">
        <authorList>
            <consortium name="The Klebsiella pneumonia Genome Sequencing Project"/>
            <person name="McClelland M."/>
            <person name="Sanderson E.K."/>
            <person name="Spieth J."/>
            <person name="Clifton W.S."/>
            <person name="Latreille P."/>
            <person name="Sabo A."/>
            <person name="Pepin K."/>
            <person name="Bhonagiri V."/>
            <person name="Porwollik S."/>
            <person name="Ali J."/>
            <person name="Wilson R.K."/>
        </authorList>
    </citation>
    <scope>NUCLEOTIDE SEQUENCE [LARGE SCALE GENOMIC DNA]</scope>
    <source>
        <strain>ATCC 700721 / MGH 78578</strain>
    </source>
</reference>
<sequence>MTTILKHLPVGQRIGIAFSGGLDTSAALLWMRKKGAVPYAYTANLGQPDEDDYDAIPRRAKEYGAEGARLIDCRKQLVAEGIAAIQCGAFHNTTGGLTYFNTTPLGRAVTGTMLVAAMKEDGVNIWGDGSTYKGNDIERFYRYGLLTNAELQIYKPWLDSDFINELGGRHEMSEFMIACGFDYKMSVEKAYSTDSNMLGATHEAKDLEFLNSSVKIVNPIMGVKFWDENVKIPAEEVTVRFEQGHPVALNGKTFADDVEMMLEANRIGGRHGLGMSDQIENRIIEAKSRGIYEAPGMALLHIAYERLLTGIHNEDTIEQYHAHGRQLGRLLYQGRWFDSQALMLRDSLQRWVASQITGEVTLELRRGNDYSILNTVSDNLTYKAERLTMEKGDSMFTAEDRIGQLTMRNLDITDTREKLFGYAQSGLLSASSATGLPQVENLENKGK</sequence>
<accession>A6TEJ0</accession>
<protein>
    <recommendedName>
        <fullName evidence="1">Argininosuccinate synthase</fullName>
        <ecNumber evidence="1">6.3.4.5</ecNumber>
    </recommendedName>
    <alternativeName>
        <fullName evidence="1">Citrulline--aspartate ligase</fullName>
    </alternativeName>
</protein>
<organism>
    <name type="scientific">Klebsiella pneumoniae subsp. pneumoniae (strain ATCC 700721 / MGH 78578)</name>
    <dbReference type="NCBI Taxonomy" id="272620"/>
    <lineage>
        <taxon>Bacteria</taxon>
        <taxon>Pseudomonadati</taxon>
        <taxon>Pseudomonadota</taxon>
        <taxon>Gammaproteobacteria</taxon>
        <taxon>Enterobacterales</taxon>
        <taxon>Enterobacteriaceae</taxon>
        <taxon>Klebsiella/Raoultella group</taxon>
        <taxon>Klebsiella</taxon>
        <taxon>Klebsiella pneumoniae complex</taxon>
    </lineage>
</organism>